<comment type="function">
    <text evidence="1">Indispensable for the control of thyroid structure and metabolism.</text>
</comment>
<comment type="subunit">
    <text>Heterodimer of a common alpha chain and a unique beta chain which confers biological specificity to thyrotropin, lutropin, follitropin and gonadotropin.</text>
</comment>
<comment type="subcellular location">
    <subcellularLocation>
        <location>Secreted</location>
    </subcellularLocation>
</comment>
<comment type="similarity">
    <text evidence="3">Belongs to the glycoprotein hormones subunit beta family.</text>
</comment>
<keyword id="KW-1015">Disulfide bond</keyword>
<keyword id="KW-0325">Glycoprotein</keyword>
<keyword id="KW-0372">Hormone</keyword>
<keyword id="KW-1185">Reference proteome</keyword>
<keyword id="KW-0964">Secreted</keyword>
<keyword id="KW-0732">Signal</keyword>
<name>TSHB_CHICK</name>
<accession>O57340</accession>
<gene>
    <name type="primary">TSHB</name>
</gene>
<dbReference type="EMBL" id="AF033495">
    <property type="protein sequence ID" value="AAB88127.1"/>
    <property type="molecule type" value="mRNA"/>
</dbReference>
<dbReference type="RefSeq" id="NP_990394.1">
    <property type="nucleotide sequence ID" value="NM_205063.4"/>
</dbReference>
<dbReference type="RefSeq" id="XP_015154381.1">
    <property type="nucleotide sequence ID" value="XM_015298895.1"/>
</dbReference>
<dbReference type="RefSeq" id="XP_015154382.1">
    <property type="nucleotide sequence ID" value="XM_015298896.1"/>
</dbReference>
<dbReference type="RefSeq" id="XP_024999438.1">
    <property type="nucleotide sequence ID" value="XM_025143670.3"/>
</dbReference>
<dbReference type="RefSeq" id="XP_046760058.1">
    <property type="nucleotide sequence ID" value="XM_046904102.1"/>
</dbReference>
<dbReference type="RefSeq" id="XP_046788839.1">
    <property type="nucleotide sequence ID" value="XM_046932883.1"/>
</dbReference>
<dbReference type="RefSeq" id="XP_046788840.1">
    <property type="nucleotide sequence ID" value="XM_046932884.1"/>
</dbReference>
<dbReference type="SMR" id="O57340"/>
<dbReference type="FunCoup" id="O57340">
    <property type="interactions" value="7"/>
</dbReference>
<dbReference type="STRING" id="9031.ENSGALP00000004015"/>
<dbReference type="GlyCosmos" id="O57340">
    <property type="glycosylation" value="1 site, No reported glycans"/>
</dbReference>
<dbReference type="GlyGen" id="O57340">
    <property type="glycosylation" value="1 site"/>
</dbReference>
<dbReference type="PaxDb" id="9031-ENSGALP00000004015"/>
<dbReference type="Ensembl" id="ENSGALT00010062007.1">
    <property type="protein sequence ID" value="ENSGALP00010038296.1"/>
    <property type="gene ID" value="ENSGALG00010025394.1"/>
</dbReference>
<dbReference type="GeneID" id="395937"/>
<dbReference type="KEGG" id="gga:395937"/>
<dbReference type="CTD" id="7252"/>
<dbReference type="VEuPathDB" id="HostDB:geneid_395937"/>
<dbReference type="eggNOG" id="ENOG502S2JW">
    <property type="taxonomic scope" value="Eukaryota"/>
</dbReference>
<dbReference type="GeneTree" id="ENSGT00940000158152"/>
<dbReference type="HOGENOM" id="CLU_126319_0_2_1"/>
<dbReference type="InParanoid" id="O57340"/>
<dbReference type="OMA" id="PTEYMMH"/>
<dbReference type="OrthoDB" id="5870230at2759"/>
<dbReference type="PhylomeDB" id="O57340"/>
<dbReference type="TreeFam" id="TF332940"/>
<dbReference type="Reactome" id="R-GGA-209822">
    <property type="pathway name" value="Glycoprotein hormones"/>
</dbReference>
<dbReference type="Reactome" id="R-GGA-209968">
    <property type="pathway name" value="Thyroxine biosynthesis"/>
</dbReference>
<dbReference type="Reactome" id="R-GGA-375281">
    <property type="pathway name" value="Hormone ligand-binding receptors"/>
</dbReference>
<dbReference type="Reactome" id="R-GGA-418555">
    <property type="pathway name" value="G alpha (s) signalling events"/>
</dbReference>
<dbReference type="PRO" id="PR:O57340"/>
<dbReference type="Proteomes" id="UP000000539">
    <property type="component" value="Chromosome 26"/>
</dbReference>
<dbReference type="Bgee" id="ENSGALG00000002550">
    <property type="expression patterns" value="Expressed in spleen and 8 other cell types or tissues"/>
</dbReference>
<dbReference type="GO" id="GO:0005737">
    <property type="term" value="C:cytoplasm"/>
    <property type="evidence" value="ECO:0000318"/>
    <property type="project" value="GO_Central"/>
</dbReference>
<dbReference type="GO" id="GO:0005615">
    <property type="term" value="C:extracellular space"/>
    <property type="evidence" value="ECO:0000318"/>
    <property type="project" value="GO_Central"/>
</dbReference>
<dbReference type="GO" id="GO:0005179">
    <property type="term" value="F:hormone activity"/>
    <property type="evidence" value="ECO:0007669"/>
    <property type="project" value="UniProtKB-KW"/>
</dbReference>
<dbReference type="GO" id="GO:0007186">
    <property type="term" value="P:G protein-coupled receptor signaling pathway"/>
    <property type="evidence" value="ECO:0000318"/>
    <property type="project" value="GO_Central"/>
</dbReference>
<dbReference type="CDD" id="cd00069">
    <property type="entry name" value="GHB_like"/>
    <property type="match status" value="1"/>
</dbReference>
<dbReference type="FunFam" id="2.10.90.10:FF:000007">
    <property type="entry name" value="Luteinizing hormone beta subunit"/>
    <property type="match status" value="1"/>
</dbReference>
<dbReference type="Gene3D" id="2.10.90.10">
    <property type="entry name" value="Cystine-knot cytokines"/>
    <property type="match status" value="1"/>
</dbReference>
<dbReference type="InterPro" id="IPR029034">
    <property type="entry name" value="Cystine-knot_cytokine"/>
</dbReference>
<dbReference type="InterPro" id="IPR006208">
    <property type="entry name" value="Glyco_hormone_CN"/>
</dbReference>
<dbReference type="InterPro" id="IPR001545">
    <property type="entry name" value="Gonadotropin_bsu"/>
</dbReference>
<dbReference type="InterPro" id="IPR018245">
    <property type="entry name" value="Gonadotropin_bsu_CS"/>
</dbReference>
<dbReference type="PANTHER" id="PTHR11515">
    <property type="entry name" value="GLYCOPROTEIN HORMONE BETA CHAIN"/>
    <property type="match status" value="1"/>
</dbReference>
<dbReference type="PANTHER" id="PTHR11515:SF5">
    <property type="entry name" value="THYROTROPIN SUBUNIT BETA"/>
    <property type="match status" value="1"/>
</dbReference>
<dbReference type="Pfam" id="PF00007">
    <property type="entry name" value="Cys_knot"/>
    <property type="match status" value="1"/>
</dbReference>
<dbReference type="SMART" id="SM00068">
    <property type="entry name" value="GHB"/>
    <property type="match status" value="1"/>
</dbReference>
<dbReference type="SUPFAM" id="SSF57501">
    <property type="entry name" value="Cystine-knot cytokines"/>
    <property type="match status" value="1"/>
</dbReference>
<dbReference type="PROSITE" id="PS00261">
    <property type="entry name" value="GLYCO_HORMONE_BETA_1"/>
    <property type="match status" value="1"/>
</dbReference>
<dbReference type="PROSITE" id="PS00689">
    <property type="entry name" value="GLYCO_HORMONE_BETA_2"/>
    <property type="match status" value="1"/>
</dbReference>
<proteinExistence type="evidence at transcript level"/>
<feature type="signal peptide" evidence="2">
    <location>
        <begin position="1"/>
        <end position="16"/>
    </location>
</feature>
<feature type="chain" id="PRO_0000011756" description="Thyrotropin subunit beta">
    <location>
        <begin position="17"/>
        <end position="134"/>
    </location>
</feature>
<feature type="glycosylation site" description="N-linked (GlcNAc...) asparagine" evidence="2">
    <location>
        <position position="43"/>
    </location>
</feature>
<feature type="disulfide bond" evidence="1">
    <location>
        <begin position="22"/>
        <end position="72"/>
    </location>
</feature>
<feature type="disulfide bond" evidence="1">
    <location>
        <begin position="36"/>
        <end position="87"/>
    </location>
</feature>
<feature type="disulfide bond" evidence="1">
    <location>
        <begin position="39"/>
        <end position="125"/>
    </location>
</feature>
<feature type="disulfide bond" evidence="1">
    <location>
        <begin position="47"/>
        <end position="103"/>
    </location>
</feature>
<feature type="disulfide bond" evidence="1">
    <location>
        <begin position="51"/>
        <end position="105"/>
    </location>
</feature>
<feature type="disulfide bond" evidence="1">
    <location>
        <begin position="108"/>
        <end position="115"/>
    </location>
</feature>
<protein>
    <recommendedName>
        <fullName>Thyrotropin subunit beta</fullName>
    </recommendedName>
    <alternativeName>
        <fullName>Thyroid-stimulating hormone subunit beta</fullName>
        <shortName>TSH-B</shortName>
        <shortName>TSH-beta</shortName>
    </alternativeName>
    <alternativeName>
        <fullName>Thyrotropin beta chain</fullName>
    </alternativeName>
</protein>
<sequence length="134" mass="15065">MSPFFMMSLLFGLTFGQTASVCAPSEYTIHVEKRECAYCLAINTTICAGFCMTRDSNGKKLLLKSALSQNVCTYKEMFYQTALIPGCPHHTIPYYSYPVAISCKCGKCNTDYSDCVHEKVRTNYCTKPQKLCNM</sequence>
<reference key="1">
    <citation type="journal article" date="1997" name="Gen. Comp. Endocrinol.">
        <title>Cloning and sequence analysis of a cDNA for the beta subunit of chicken thyroid-stimulating hormone.</title>
        <authorList>
            <person name="Gregory C.C."/>
            <person name="Porter T.E."/>
        </authorList>
    </citation>
    <scope>NUCLEOTIDE SEQUENCE [MRNA]</scope>
    <source>
        <tissue>Pituitary anterior lobe</tissue>
    </source>
</reference>
<organism>
    <name type="scientific">Gallus gallus</name>
    <name type="common">Chicken</name>
    <dbReference type="NCBI Taxonomy" id="9031"/>
    <lineage>
        <taxon>Eukaryota</taxon>
        <taxon>Metazoa</taxon>
        <taxon>Chordata</taxon>
        <taxon>Craniata</taxon>
        <taxon>Vertebrata</taxon>
        <taxon>Euteleostomi</taxon>
        <taxon>Archelosauria</taxon>
        <taxon>Archosauria</taxon>
        <taxon>Dinosauria</taxon>
        <taxon>Saurischia</taxon>
        <taxon>Theropoda</taxon>
        <taxon>Coelurosauria</taxon>
        <taxon>Aves</taxon>
        <taxon>Neognathae</taxon>
        <taxon>Galloanserae</taxon>
        <taxon>Galliformes</taxon>
        <taxon>Phasianidae</taxon>
        <taxon>Phasianinae</taxon>
        <taxon>Gallus</taxon>
    </lineage>
</organism>
<evidence type="ECO:0000250" key="1"/>
<evidence type="ECO:0000255" key="2"/>
<evidence type="ECO:0000305" key="3"/>